<keyword id="KW-0143">Chaperone</keyword>
<keyword id="KW-0963">Cytoplasm</keyword>
<keyword id="KW-0690">Ribosome biogenesis</keyword>
<keyword id="KW-0698">rRNA processing</keyword>
<comment type="function">
    <text evidence="1">An accessory protein needed during the final step in the assembly of 30S ribosomal subunit, possibly for assembly of the head region. Essential for efficient processing of 16S rRNA. May be needed both before and after RbfA during the maturation of 16S rRNA. It has affinity for free ribosomal 30S subunits but not for 70S ribosomes.</text>
</comment>
<comment type="subunit">
    <text evidence="1">Binds ribosomal protein uS19.</text>
</comment>
<comment type="subcellular location">
    <subcellularLocation>
        <location evidence="1">Cytoplasm</location>
    </subcellularLocation>
</comment>
<comment type="domain">
    <text evidence="1">The PRC barrel domain binds ribosomal protein uS19.</text>
</comment>
<comment type="similarity">
    <text evidence="1">Belongs to the RimM family.</text>
</comment>
<reference key="1">
    <citation type="journal article" date="2001" name="Lancet">
        <title>Whole genome sequencing of meticillin-resistant Staphylococcus aureus.</title>
        <authorList>
            <person name="Kuroda M."/>
            <person name="Ohta T."/>
            <person name="Uchiyama I."/>
            <person name="Baba T."/>
            <person name="Yuzawa H."/>
            <person name="Kobayashi I."/>
            <person name="Cui L."/>
            <person name="Oguchi A."/>
            <person name="Aoki K."/>
            <person name="Nagai Y."/>
            <person name="Lian J.-Q."/>
            <person name="Ito T."/>
            <person name="Kanamori M."/>
            <person name="Matsumaru H."/>
            <person name="Maruyama A."/>
            <person name="Murakami H."/>
            <person name="Hosoyama A."/>
            <person name="Mizutani-Ui Y."/>
            <person name="Takahashi N.K."/>
            <person name="Sawano T."/>
            <person name="Inoue R."/>
            <person name="Kaito C."/>
            <person name="Sekimizu K."/>
            <person name="Hirakawa H."/>
            <person name="Kuhara S."/>
            <person name="Goto S."/>
            <person name="Yabuzaki J."/>
            <person name="Kanehisa M."/>
            <person name="Yamashita A."/>
            <person name="Oshima K."/>
            <person name="Furuya K."/>
            <person name="Yoshino C."/>
            <person name="Shiba T."/>
            <person name="Hattori M."/>
            <person name="Ogasawara N."/>
            <person name="Hayashi H."/>
            <person name="Hiramatsu K."/>
        </authorList>
    </citation>
    <scope>NUCLEOTIDE SEQUENCE [LARGE SCALE GENOMIC DNA]</scope>
    <source>
        <strain>Mu50 / ATCC 700699</strain>
    </source>
</reference>
<feature type="chain" id="PRO_0000163352" description="Ribosome maturation factor RimM">
    <location>
        <begin position="1"/>
        <end position="167"/>
    </location>
</feature>
<feature type="domain" description="PRC barrel" evidence="1">
    <location>
        <begin position="94"/>
        <end position="165"/>
    </location>
</feature>
<organism>
    <name type="scientific">Staphylococcus aureus (strain Mu50 / ATCC 700699)</name>
    <dbReference type="NCBI Taxonomy" id="158878"/>
    <lineage>
        <taxon>Bacteria</taxon>
        <taxon>Bacillati</taxon>
        <taxon>Bacillota</taxon>
        <taxon>Bacilli</taxon>
        <taxon>Bacillales</taxon>
        <taxon>Staphylococcaceae</taxon>
        <taxon>Staphylococcus</taxon>
    </lineage>
</organism>
<sequence>MRVEVGQIVNTHGIKGEIKVKSNSDFTDVRFQPGQVLTVVHNNNDLEYTVKSHRVHKGLHMLTFEGINNINDIEHLKGSSIYQERDHEDIVLEENEFYYSDIIGCTVFDDQETPIGRVINIFETGANDVWVIKGSKEYLIPYIADVVKEVDVENKKIIITPMEGLLD</sequence>
<name>RIMM_STAAM</name>
<accession>P66655</accession>
<accession>Q99UN1</accession>
<evidence type="ECO:0000255" key="1">
    <source>
        <dbReference type="HAMAP-Rule" id="MF_00014"/>
    </source>
</evidence>
<proteinExistence type="inferred from homology"/>
<protein>
    <recommendedName>
        <fullName evidence="1">Ribosome maturation factor RimM</fullName>
    </recommendedName>
</protein>
<dbReference type="EMBL" id="BA000017">
    <property type="protein sequence ID" value="BAB57401.1"/>
    <property type="molecule type" value="Genomic_DNA"/>
</dbReference>
<dbReference type="RefSeq" id="WP_001261987.1">
    <property type="nucleotide sequence ID" value="NC_002758.2"/>
</dbReference>
<dbReference type="SMR" id="P66655"/>
<dbReference type="KEGG" id="sav:SAV1239"/>
<dbReference type="HOGENOM" id="CLU_077636_3_1_9"/>
<dbReference type="PhylomeDB" id="P66655"/>
<dbReference type="Proteomes" id="UP000002481">
    <property type="component" value="Chromosome"/>
</dbReference>
<dbReference type="GO" id="GO:0005737">
    <property type="term" value="C:cytoplasm"/>
    <property type="evidence" value="ECO:0007669"/>
    <property type="project" value="UniProtKB-SubCell"/>
</dbReference>
<dbReference type="GO" id="GO:0005840">
    <property type="term" value="C:ribosome"/>
    <property type="evidence" value="ECO:0007669"/>
    <property type="project" value="InterPro"/>
</dbReference>
<dbReference type="GO" id="GO:0043022">
    <property type="term" value="F:ribosome binding"/>
    <property type="evidence" value="ECO:0007669"/>
    <property type="project" value="InterPro"/>
</dbReference>
<dbReference type="GO" id="GO:0042274">
    <property type="term" value="P:ribosomal small subunit biogenesis"/>
    <property type="evidence" value="ECO:0007669"/>
    <property type="project" value="UniProtKB-UniRule"/>
</dbReference>
<dbReference type="GO" id="GO:0006364">
    <property type="term" value="P:rRNA processing"/>
    <property type="evidence" value="ECO:0007669"/>
    <property type="project" value="UniProtKB-UniRule"/>
</dbReference>
<dbReference type="Gene3D" id="2.30.30.240">
    <property type="entry name" value="PRC-barrel domain"/>
    <property type="match status" value="1"/>
</dbReference>
<dbReference type="Gene3D" id="2.40.30.60">
    <property type="entry name" value="RimM"/>
    <property type="match status" value="1"/>
</dbReference>
<dbReference type="HAMAP" id="MF_00014">
    <property type="entry name" value="Ribosome_mat_RimM"/>
    <property type="match status" value="1"/>
</dbReference>
<dbReference type="InterPro" id="IPR011033">
    <property type="entry name" value="PRC_barrel-like_sf"/>
</dbReference>
<dbReference type="InterPro" id="IPR056792">
    <property type="entry name" value="PRC_RimM"/>
</dbReference>
<dbReference type="InterPro" id="IPR011961">
    <property type="entry name" value="RimM"/>
</dbReference>
<dbReference type="InterPro" id="IPR002676">
    <property type="entry name" value="RimM_N"/>
</dbReference>
<dbReference type="InterPro" id="IPR036976">
    <property type="entry name" value="RimM_N_sf"/>
</dbReference>
<dbReference type="InterPro" id="IPR009000">
    <property type="entry name" value="Transl_B-barrel_sf"/>
</dbReference>
<dbReference type="NCBIfam" id="TIGR02273">
    <property type="entry name" value="16S_RimM"/>
    <property type="match status" value="1"/>
</dbReference>
<dbReference type="PANTHER" id="PTHR33692">
    <property type="entry name" value="RIBOSOME MATURATION FACTOR RIMM"/>
    <property type="match status" value="1"/>
</dbReference>
<dbReference type="PANTHER" id="PTHR33692:SF1">
    <property type="entry name" value="RIBOSOME MATURATION FACTOR RIMM"/>
    <property type="match status" value="1"/>
</dbReference>
<dbReference type="Pfam" id="PF24986">
    <property type="entry name" value="PRC_RimM"/>
    <property type="match status" value="1"/>
</dbReference>
<dbReference type="Pfam" id="PF01782">
    <property type="entry name" value="RimM"/>
    <property type="match status" value="1"/>
</dbReference>
<dbReference type="SUPFAM" id="SSF50346">
    <property type="entry name" value="PRC-barrel domain"/>
    <property type="match status" value="1"/>
</dbReference>
<dbReference type="SUPFAM" id="SSF50447">
    <property type="entry name" value="Translation proteins"/>
    <property type="match status" value="1"/>
</dbReference>
<gene>
    <name evidence="1" type="primary">rimM</name>
    <name type="ordered locus">SAV1239</name>
</gene>